<comment type="function">
    <text evidence="1">Presumably involved in the processing and regular turnover of intracellular proteins. Catalyzes the removal of unsubstituted N-terminal amino acids from various peptides.</text>
</comment>
<comment type="catalytic activity">
    <reaction evidence="1">
        <text>Release of an N-terminal amino acid, Xaa-|-Yaa-, in which Xaa is preferably Leu, but may be other amino acids including Pro although not Arg or Lys, and Yaa may be Pro. Amino acid amides and methyl esters are also readily hydrolyzed, but rates on arylamides are exceedingly low.</text>
        <dbReference type="EC" id="3.4.11.1"/>
    </reaction>
</comment>
<comment type="catalytic activity">
    <reaction evidence="1">
        <text>Release of an N-terminal amino acid, preferentially leucine, but not glutamic or aspartic acids.</text>
        <dbReference type="EC" id="3.4.11.10"/>
    </reaction>
</comment>
<comment type="cofactor">
    <cofactor evidence="1">
        <name>Mn(2+)</name>
        <dbReference type="ChEBI" id="CHEBI:29035"/>
    </cofactor>
    <text evidence="1">Binds 2 manganese ions per subunit.</text>
</comment>
<comment type="subcellular location">
    <subcellularLocation>
        <location evidence="1">Cytoplasm</location>
    </subcellularLocation>
</comment>
<comment type="similarity">
    <text evidence="1">Belongs to the peptidase M17 family.</text>
</comment>
<reference key="1">
    <citation type="journal article" date="2011" name="J. Bacteriol.">
        <title>Comparative genomics of 28 Salmonella enterica isolates: evidence for CRISPR-mediated adaptive sublineage evolution.</title>
        <authorList>
            <person name="Fricke W.F."/>
            <person name="Mammel M.K."/>
            <person name="McDermott P.F."/>
            <person name="Tartera C."/>
            <person name="White D.G."/>
            <person name="Leclerc J.E."/>
            <person name="Ravel J."/>
            <person name="Cebula T.A."/>
        </authorList>
    </citation>
    <scope>NUCLEOTIDE SEQUENCE [LARGE SCALE GENOMIC DNA]</scope>
    <source>
        <strain>SL476</strain>
    </source>
</reference>
<organism>
    <name type="scientific">Salmonella heidelberg (strain SL476)</name>
    <dbReference type="NCBI Taxonomy" id="454169"/>
    <lineage>
        <taxon>Bacteria</taxon>
        <taxon>Pseudomonadati</taxon>
        <taxon>Pseudomonadota</taxon>
        <taxon>Gammaproteobacteria</taxon>
        <taxon>Enterobacterales</taxon>
        <taxon>Enterobacteriaceae</taxon>
        <taxon>Salmonella</taxon>
    </lineage>
</organism>
<accession>B4TG58</accession>
<gene>
    <name evidence="1" type="primary">pepA</name>
    <name type="ordered locus">SeHA_C4882</name>
</gene>
<protein>
    <recommendedName>
        <fullName evidence="1">Probable cytosol aminopeptidase</fullName>
        <ecNumber evidence="1">3.4.11.1</ecNumber>
    </recommendedName>
    <alternativeName>
        <fullName evidence="1">Leucine aminopeptidase</fullName>
        <shortName evidence="1">LAP</shortName>
        <ecNumber evidence="1">3.4.11.10</ecNumber>
    </alternativeName>
    <alternativeName>
        <fullName evidence="1">Leucyl aminopeptidase</fullName>
    </alternativeName>
</protein>
<sequence length="503" mass="54890">MEFSVKSGSPEKQRSACIVVGVFEPRRLSPIAEQLDKISDGYISALLRRGELEGKPGQTLLLHHVPNVLSERILLIGCGKERELDERQYKQVIQKTINTLNDTGSMEAVCFLTELHVKGRNNYWKVRQAVETAKETLYSFDQLKTNKSEPRRPLRKMVFNVPTRRELTSGERAIQHGLAIAAGIKAAKDLGNMPPNICNAAYLASQARQLADSYSKNVITRVIGEQQMRELGMNAYLAVGHGSQNESLMSVIEYKGNPSEDARPIVLVGKGLTFDSGGISIKPSEGMDEMKYDMCGAAAVYGVMRMVAELQLPINVIGVLAGCENMPGGRAYRPGDVLTTMSGQTVEVLNTDAEGRLVLCDVLTYVERFEPEAVIDVATLTGACVIALGHHITGLMSNHNPLAHELIGASEQAGDRAWRLPLGDEFQEQLESNFADMANIGGRPGGAITAGCFLSRFTRKYNWAHLDIAGTAWRSGKAKGATGRPVALLSQFLLNRAGFNGEE</sequence>
<proteinExistence type="inferred from homology"/>
<name>AMPA_SALHS</name>
<feature type="chain" id="PRO_1000098347" description="Probable cytosol aminopeptidase">
    <location>
        <begin position="1"/>
        <end position="503"/>
    </location>
</feature>
<feature type="active site" evidence="1">
    <location>
        <position position="282"/>
    </location>
</feature>
<feature type="active site" evidence="1">
    <location>
        <position position="356"/>
    </location>
</feature>
<feature type="binding site" evidence="1">
    <location>
        <position position="270"/>
    </location>
    <ligand>
        <name>Mn(2+)</name>
        <dbReference type="ChEBI" id="CHEBI:29035"/>
        <label>2</label>
    </ligand>
</feature>
<feature type="binding site" evidence="1">
    <location>
        <position position="275"/>
    </location>
    <ligand>
        <name>Mn(2+)</name>
        <dbReference type="ChEBI" id="CHEBI:29035"/>
        <label>1</label>
    </ligand>
</feature>
<feature type="binding site" evidence="1">
    <location>
        <position position="275"/>
    </location>
    <ligand>
        <name>Mn(2+)</name>
        <dbReference type="ChEBI" id="CHEBI:29035"/>
        <label>2</label>
    </ligand>
</feature>
<feature type="binding site" evidence="1">
    <location>
        <position position="293"/>
    </location>
    <ligand>
        <name>Mn(2+)</name>
        <dbReference type="ChEBI" id="CHEBI:29035"/>
        <label>2</label>
    </ligand>
</feature>
<feature type="binding site" evidence="1">
    <location>
        <position position="352"/>
    </location>
    <ligand>
        <name>Mn(2+)</name>
        <dbReference type="ChEBI" id="CHEBI:29035"/>
        <label>1</label>
    </ligand>
</feature>
<feature type="binding site" evidence="1">
    <location>
        <position position="354"/>
    </location>
    <ligand>
        <name>Mn(2+)</name>
        <dbReference type="ChEBI" id="CHEBI:29035"/>
        <label>1</label>
    </ligand>
</feature>
<feature type="binding site" evidence="1">
    <location>
        <position position="354"/>
    </location>
    <ligand>
        <name>Mn(2+)</name>
        <dbReference type="ChEBI" id="CHEBI:29035"/>
        <label>2</label>
    </ligand>
</feature>
<keyword id="KW-0031">Aminopeptidase</keyword>
<keyword id="KW-0963">Cytoplasm</keyword>
<keyword id="KW-0378">Hydrolase</keyword>
<keyword id="KW-0464">Manganese</keyword>
<keyword id="KW-0479">Metal-binding</keyword>
<keyword id="KW-0645">Protease</keyword>
<evidence type="ECO:0000255" key="1">
    <source>
        <dbReference type="HAMAP-Rule" id="MF_00181"/>
    </source>
</evidence>
<dbReference type="EC" id="3.4.11.1" evidence="1"/>
<dbReference type="EC" id="3.4.11.10" evidence="1"/>
<dbReference type="EMBL" id="CP001120">
    <property type="protein sequence ID" value="ACF68497.1"/>
    <property type="molecule type" value="Genomic_DNA"/>
</dbReference>
<dbReference type="RefSeq" id="WP_000397158.1">
    <property type="nucleotide sequence ID" value="NC_011083.1"/>
</dbReference>
<dbReference type="SMR" id="B4TG58"/>
<dbReference type="MEROPS" id="M17.003"/>
<dbReference type="KEGG" id="seh:SeHA_C4882"/>
<dbReference type="HOGENOM" id="CLU_013734_2_2_6"/>
<dbReference type="Proteomes" id="UP000001866">
    <property type="component" value="Chromosome"/>
</dbReference>
<dbReference type="GO" id="GO:0005737">
    <property type="term" value="C:cytoplasm"/>
    <property type="evidence" value="ECO:0007669"/>
    <property type="project" value="UniProtKB-SubCell"/>
</dbReference>
<dbReference type="GO" id="GO:0030145">
    <property type="term" value="F:manganese ion binding"/>
    <property type="evidence" value="ECO:0007669"/>
    <property type="project" value="UniProtKB-UniRule"/>
</dbReference>
<dbReference type="GO" id="GO:0070006">
    <property type="term" value="F:metalloaminopeptidase activity"/>
    <property type="evidence" value="ECO:0007669"/>
    <property type="project" value="InterPro"/>
</dbReference>
<dbReference type="GO" id="GO:0006508">
    <property type="term" value="P:proteolysis"/>
    <property type="evidence" value="ECO:0007669"/>
    <property type="project" value="UniProtKB-KW"/>
</dbReference>
<dbReference type="CDD" id="cd00433">
    <property type="entry name" value="Peptidase_M17"/>
    <property type="match status" value="1"/>
</dbReference>
<dbReference type="FunFam" id="3.40.220.10:FF:000001">
    <property type="entry name" value="Probable cytosol aminopeptidase"/>
    <property type="match status" value="1"/>
</dbReference>
<dbReference type="FunFam" id="3.40.630.10:FF:000004">
    <property type="entry name" value="Probable cytosol aminopeptidase"/>
    <property type="match status" value="1"/>
</dbReference>
<dbReference type="Gene3D" id="3.40.220.10">
    <property type="entry name" value="Leucine Aminopeptidase, subunit E, domain 1"/>
    <property type="match status" value="1"/>
</dbReference>
<dbReference type="Gene3D" id="3.40.630.10">
    <property type="entry name" value="Zn peptidases"/>
    <property type="match status" value="1"/>
</dbReference>
<dbReference type="HAMAP" id="MF_00181">
    <property type="entry name" value="Cytosol_peptidase_M17"/>
    <property type="match status" value="1"/>
</dbReference>
<dbReference type="InterPro" id="IPR011356">
    <property type="entry name" value="Leucine_aapep/pepB"/>
</dbReference>
<dbReference type="InterPro" id="IPR043472">
    <property type="entry name" value="Macro_dom-like"/>
</dbReference>
<dbReference type="InterPro" id="IPR000819">
    <property type="entry name" value="Peptidase_M17_C"/>
</dbReference>
<dbReference type="InterPro" id="IPR023042">
    <property type="entry name" value="Peptidase_M17_leu_NH2_pept"/>
</dbReference>
<dbReference type="InterPro" id="IPR008283">
    <property type="entry name" value="Peptidase_M17_N"/>
</dbReference>
<dbReference type="NCBIfam" id="NF002072">
    <property type="entry name" value="PRK00913.1-1"/>
    <property type="match status" value="1"/>
</dbReference>
<dbReference type="NCBIfam" id="NF002073">
    <property type="entry name" value="PRK00913.1-2"/>
    <property type="match status" value="1"/>
</dbReference>
<dbReference type="NCBIfam" id="NF002074">
    <property type="entry name" value="PRK00913.1-4"/>
    <property type="match status" value="1"/>
</dbReference>
<dbReference type="PANTHER" id="PTHR11963:SF23">
    <property type="entry name" value="CYTOSOL AMINOPEPTIDASE"/>
    <property type="match status" value="1"/>
</dbReference>
<dbReference type="PANTHER" id="PTHR11963">
    <property type="entry name" value="LEUCINE AMINOPEPTIDASE-RELATED"/>
    <property type="match status" value="1"/>
</dbReference>
<dbReference type="Pfam" id="PF00883">
    <property type="entry name" value="Peptidase_M17"/>
    <property type="match status" value="1"/>
</dbReference>
<dbReference type="Pfam" id="PF02789">
    <property type="entry name" value="Peptidase_M17_N"/>
    <property type="match status" value="1"/>
</dbReference>
<dbReference type="PRINTS" id="PR00481">
    <property type="entry name" value="LAMNOPPTDASE"/>
</dbReference>
<dbReference type="SUPFAM" id="SSF52949">
    <property type="entry name" value="Macro domain-like"/>
    <property type="match status" value="1"/>
</dbReference>
<dbReference type="SUPFAM" id="SSF53187">
    <property type="entry name" value="Zn-dependent exopeptidases"/>
    <property type="match status" value="1"/>
</dbReference>
<dbReference type="PROSITE" id="PS00631">
    <property type="entry name" value="CYTOSOL_AP"/>
    <property type="match status" value="1"/>
</dbReference>